<sequence>MATRNRTLLFRKYRNSLRSVRAPMGSSSSSTLTEHNSLTGAKSGLGPVIEMASTSLLNPNRSYAPVSTEDPGNSSRGTITVGLPPDWVDVSEEISVYIQRARTKMAELGKAHAKALMPSFGDGKEDQHQIETLTQEVTFLLKKSEKQLQRLSAAGPSEDSNVRKNVQRSLATDLQNLSMELRKKQSTYLKRLRLQKEDGADLEMNLNGSRYKAEDDDFDDMVFSEHQMSKIKKSEEISIEREKEIQQVVESVSELAQIMKDLSALVIDQGTIVDRIDYNIQNVASTVDDGLKQLQKAERTQRQGGMVMCASVLVILCFIMLVLLILKEILL</sequence>
<organism>
    <name type="scientific">Arabidopsis thaliana</name>
    <name type="common">Mouse-ear cress</name>
    <dbReference type="NCBI Taxonomy" id="3702"/>
    <lineage>
        <taxon>Eukaryota</taxon>
        <taxon>Viridiplantae</taxon>
        <taxon>Streptophyta</taxon>
        <taxon>Embryophyta</taxon>
        <taxon>Tracheophyta</taxon>
        <taxon>Spermatophyta</taxon>
        <taxon>Magnoliopsida</taxon>
        <taxon>eudicotyledons</taxon>
        <taxon>Gunneridae</taxon>
        <taxon>Pentapetalae</taxon>
        <taxon>rosids</taxon>
        <taxon>malvids</taxon>
        <taxon>Brassicales</taxon>
        <taxon>Brassicaceae</taxon>
        <taxon>Camelineae</taxon>
        <taxon>Arabidopsis</taxon>
    </lineage>
</organism>
<comment type="function">
    <text evidence="6 7">Contributes to the regulation of secretory and vacuolar transport pathways in the post-Golgi network, and to the maintenance of the Golgi apparatus and trans-Golgi network (TGN) morphologies (PubMed:22307646). Vesicle trafficking protein that functions in the secretory pathway and mediates liposome fusion (PubMed:24021022). Required for extracellular resistance responses to a fungal pathogen (PubMed:22307646). Also involved in the protection of chloroplasts from salicylic acid-dependent biotic stress (PubMed:22307646).</text>
</comment>
<comment type="subunit">
    <text evidence="1">Part of the t-SNARE complex.</text>
</comment>
<comment type="subcellular location">
    <subcellularLocation>
        <location evidence="5 6">Golgi apparatus</location>
        <location evidence="5 6">trans-Golgi network membrane</location>
        <topology evidence="2">Single-pass type IV membrane protein</topology>
    </subcellularLocation>
</comment>
<comment type="alternative products">
    <event type="alternative splicing"/>
    <isoform>
        <id>Q9SUJ1-1</id>
        <name>1</name>
        <sequence type="displayed"/>
    </isoform>
    <isoform>
        <id>Q9SUJ1-2</id>
        <name>2</name>
        <sequence type="described" ref="VSP_009005"/>
    </isoform>
</comment>
<comment type="tissue specificity">
    <text evidence="5">Expressed at low levels in roots, stems, flowers and leaves.</text>
</comment>
<comment type="disruption phenotype">
    <text evidence="6">The double mutant syp42 syp43 exhibits severe pleiotropic defects, including short roots, a large number of lateral roots, semi dwarfism and early senescence (PubMed:22307646). Plants lacking the three genes SYP41 SYP42 and SYP43 are seedling lethals (PubMed:22307646).</text>
</comment>
<comment type="similarity">
    <text evidence="10">Belongs to the syntaxin family.</text>
</comment>
<protein>
    <recommendedName>
        <fullName evidence="8">Syntaxin-43</fullName>
        <shortName evidence="8">AtSYP43</shortName>
    </recommendedName>
</protein>
<name>SYP43_ARATH</name>
<accession>Q9SUJ1</accession>
<accession>Q8L7J6</accession>
<accession>Q9M9X6</accession>
<gene>
    <name evidence="8" type="primary">SYP43</name>
    <name evidence="11" type="ordered locus">At3g05710</name>
    <name evidence="12" type="ORF">F18C1.2</name>
</gene>
<keyword id="KW-0025">Alternative splicing</keyword>
<keyword id="KW-0175">Coiled coil</keyword>
<keyword id="KW-0333">Golgi apparatus</keyword>
<keyword id="KW-0472">Membrane</keyword>
<keyword id="KW-0611">Plant defense</keyword>
<keyword id="KW-0653">Protein transport</keyword>
<keyword id="KW-1185">Reference proteome</keyword>
<keyword id="KW-0812">Transmembrane</keyword>
<keyword id="KW-1133">Transmembrane helix</keyword>
<keyword id="KW-0813">Transport</keyword>
<feature type="chain" id="PRO_0000210260" description="Syntaxin-43">
    <location>
        <begin position="1"/>
        <end position="331"/>
    </location>
</feature>
<feature type="topological domain" description="Cytoplasmic" evidence="2">
    <location>
        <begin position="1"/>
        <end position="305"/>
    </location>
</feature>
<feature type="transmembrane region" description="Helical; Anchor for type IV membrane protein" evidence="2">
    <location>
        <begin position="306"/>
        <end position="326"/>
    </location>
</feature>
<feature type="topological domain" description="Vesicular" evidence="2">
    <location>
        <begin position="327"/>
        <end position="331"/>
    </location>
</feature>
<feature type="domain" description="t-SNARE coiled-coil homology" evidence="3">
    <location>
        <begin position="235"/>
        <end position="297"/>
    </location>
</feature>
<feature type="region of interest" description="Disordered" evidence="4">
    <location>
        <begin position="20"/>
        <end position="45"/>
    </location>
</feature>
<feature type="region of interest" description="Disordered" evidence="4">
    <location>
        <begin position="59"/>
        <end position="80"/>
    </location>
</feature>
<feature type="coiled-coil region" evidence="2">
    <location>
        <begin position="124"/>
        <end position="154"/>
    </location>
</feature>
<feature type="compositionally biased region" description="Polar residues" evidence="4">
    <location>
        <begin position="31"/>
        <end position="40"/>
    </location>
</feature>
<feature type="splice variant" id="VSP_009005" description="In isoform 2." evidence="8 9">
    <location>
        <position position="75"/>
    </location>
</feature>
<feature type="sequence conflict" description="In Ref. 4; AAM91286." evidence="10" ref="4">
    <original>N</original>
    <variation>T</variation>
    <location>
        <position position="207"/>
    </location>
</feature>
<feature type="sequence conflict" description="In Ref. 4; AAM91286." evidence="10" ref="4">
    <original>N</original>
    <variation>I</variation>
    <location>
        <position position="282"/>
    </location>
</feature>
<feature type="sequence conflict" description="In Ref. 4; AAM91286." evidence="10" ref="4">
    <original>G</original>
    <variation>K</variation>
    <location>
        <position position="304"/>
    </location>
</feature>
<feature type="sequence conflict" description="In Ref. 5; AAM65546." evidence="10" ref="5">
    <original>V</original>
    <variation>A</variation>
    <location>
        <position position="312"/>
    </location>
</feature>
<dbReference type="EMBL" id="AJ245408">
    <property type="protein sequence ID" value="CAB52175.1"/>
    <property type="molecule type" value="mRNA"/>
</dbReference>
<dbReference type="EMBL" id="AC011620">
    <property type="protein sequence ID" value="AAF26126.1"/>
    <property type="molecule type" value="Genomic_DNA"/>
</dbReference>
<dbReference type="EMBL" id="CP002686">
    <property type="protein sequence ID" value="AEE74282.1"/>
    <property type="molecule type" value="Genomic_DNA"/>
</dbReference>
<dbReference type="EMBL" id="CP002686">
    <property type="protein sequence ID" value="AEE74283.1"/>
    <property type="molecule type" value="Genomic_DNA"/>
</dbReference>
<dbReference type="EMBL" id="AY099723">
    <property type="protein sequence ID" value="AAM20574.1"/>
    <property type="molecule type" value="mRNA"/>
</dbReference>
<dbReference type="EMBL" id="AY128886">
    <property type="protein sequence ID" value="AAM91286.1"/>
    <property type="molecule type" value="mRNA"/>
</dbReference>
<dbReference type="EMBL" id="AY088000">
    <property type="protein sequence ID" value="AAM65546.1"/>
    <property type="molecule type" value="mRNA"/>
</dbReference>
<dbReference type="RefSeq" id="NP_566256.1">
    <molecule id="Q9SUJ1-2"/>
    <property type="nucleotide sequence ID" value="NM_111445.5"/>
</dbReference>
<dbReference type="RefSeq" id="NP_850519.1">
    <molecule id="Q9SUJ1-1"/>
    <property type="nucleotide sequence ID" value="NM_180188.3"/>
</dbReference>
<dbReference type="SMR" id="Q9SUJ1"/>
<dbReference type="BioGRID" id="5075">
    <property type="interactions" value="55"/>
</dbReference>
<dbReference type="FunCoup" id="Q9SUJ1">
    <property type="interactions" value="4286"/>
</dbReference>
<dbReference type="IntAct" id="Q9SUJ1">
    <property type="interactions" value="55"/>
</dbReference>
<dbReference type="STRING" id="3702.Q9SUJ1"/>
<dbReference type="iPTMnet" id="Q9SUJ1"/>
<dbReference type="SwissPalm" id="Q9SUJ1"/>
<dbReference type="PaxDb" id="3702-AT3G05710.2"/>
<dbReference type="ProteomicsDB" id="228469">
    <molecule id="Q9SUJ1-1"/>
</dbReference>
<dbReference type="EnsemblPlants" id="AT3G05710.1">
    <molecule id="Q9SUJ1-2"/>
    <property type="protein sequence ID" value="AT3G05710.1"/>
    <property type="gene ID" value="AT3G05710"/>
</dbReference>
<dbReference type="EnsemblPlants" id="AT3G05710.2">
    <molecule id="Q9SUJ1-1"/>
    <property type="protein sequence ID" value="AT3G05710.2"/>
    <property type="gene ID" value="AT3G05710"/>
</dbReference>
<dbReference type="GeneID" id="819740"/>
<dbReference type="Gramene" id="AT3G05710.1">
    <molecule id="Q9SUJ1-2"/>
    <property type="protein sequence ID" value="AT3G05710.1"/>
    <property type="gene ID" value="AT3G05710"/>
</dbReference>
<dbReference type="Gramene" id="AT3G05710.2">
    <molecule id="Q9SUJ1-1"/>
    <property type="protein sequence ID" value="AT3G05710.2"/>
    <property type="gene ID" value="AT3G05710"/>
</dbReference>
<dbReference type="KEGG" id="ath:AT3G05710"/>
<dbReference type="Araport" id="AT3G05710"/>
<dbReference type="TAIR" id="AT3G05710">
    <property type="gene designation" value="SYP43"/>
</dbReference>
<dbReference type="eggNOG" id="KOG0809">
    <property type="taxonomic scope" value="Eukaryota"/>
</dbReference>
<dbReference type="HOGENOM" id="CLU_038177_1_0_1"/>
<dbReference type="InParanoid" id="Q9SUJ1"/>
<dbReference type="OMA" id="NRKMCII"/>
<dbReference type="OrthoDB" id="10251371at2759"/>
<dbReference type="PhylomeDB" id="Q9SUJ1"/>
<dbReference type="PRO" id="PR:Q9SUJ1"/>
<dbReference type="Proteomes" id="UP000006548">
    <property type="component" value="Chromosome 3"/>
</dbReference>
<dbReference type="ExpressionAtlas" id="Q9SUJ1">
    <property type="expression patterns" value="baseline and differential"/>
</dbReference>
<dbReference type="GO" id="GO:0005768">
    <property type="term" value="C:endosome"/>
    <property type="evidence" value="ECO:0007005"/>
    <property type="project" value="TAIR"/>
</dbReference>
<dbReference type="GO" id="GO:0005794">
    <property type="term" value="C:Golgi apparatus"/>
    <property type="evidence" value="ECO:0007005"/>
    <property type="project" value="TAIR"/>
</dbReference>
<dbReference type="GO" id="GO:0016020">
    <property type="term" value="C:membrane"/>
    <property type="evidence" value="ECO:0007669"/>
    <property type="project" value="UniProtKB-KW"/>
</dbReference>
<dbReference type="GO" id="GO:0005802">
    <property type="term" value="C:trans-Golgi network"/>
    <property type="evidence" value="ECO:0000314"/>
    <property type="project" value="UniProtKB"/>
</dbReference>
<dbReference type="GO" id="GO:0005484">
    <property type="term" value="F:SNAP receptor activity"/>
    <property type="evidence" value="ECO:0007669"/>
    <property type="project" value="InterPro"/>
</dbReference>
<dbReference type="GO" id="GO:0009658">
    <property type="term" value="P:chloroplast organization"/>
    <property type="evidence" value="ECO:0000315"/>
    <property type="project" value="UniProtKB"/>
</dbReference>
<dbReference type="GO" id="GO:0050832">
    <property type="term" value="P:defense response to fungus"/>
    <property type="evidence" value="ECO:0000315"/>
    <property type="project" value="UniProtKB"/>
</dbReference>
<dbReference type="GO" id="GO:0007030">
    <property type="term" value="P:Golgi organization"/>
    <property type="evidence" value="ECO:0000315"/>
    <property type="project" value="UniProtKB"/>
</dbReference>
<dbReference type="GO" id="GO:0043001">
    <property type="term" value="P:Golgi to plasma membrane protein transport"/>
    <property type="evidence" value="ECO:0000315"/>
    <property type="project" value="UniProtKB"/>
</dbReference>
<dbReference type="GO" id="GO:0006896">
    <property type="term" value="P:Golgi to vacuole transport"/>
    <property type="evidence" value="ECO:0000315"/>
    <property type="project" value="UniProtKB"/>
</dbReference>
<dbReference type="GO" id="GO:0006886">
    <property type="term" value="P:intracellular protein transport"/>
    <property type="evidence" value="ECO:0000315"/>
    <property type="project" value="UniProtKB"/>
</dbReference>
<dbReference type="GO" id="GO:0009306">
    <property type="term" value="P:protein secretion"/>
    <property type="evidence" value="ECO:0000316"/>
    <property type="project" value="TAIR"/>
</dbReference>
<dbReference type="GO" id="GO:0009863">
    <property type="term" value="P:salicylic acid mediated signaling pathway"/>
    <property type="evidence" value="ECO:0000315"/>
    <property type="project" value="UniProtKB"/>
</dbReference>
<dbReference type="GO" id="GO:0098629">
    <property type="term" value="P:trans-Golgi network membrane organization"/>
    <property type="evidence" value="ECO:0000315"/>
    <property type="project" value="UniProtKB"/>
</dbReference>
<dbReference type="GO" id="GO:0007034">
    <property type="term" value="P:vacuolar transport"/>
    <property type="evidence" value="ECO:0000316"/>
    <property type="project" value="TAIR"/>
</dbReference>
<dbReference type="GO" id="GO:0006906">
    <property type="term" value="P:vesicle fusion"/>
    <property type="evidence" value="ECO:0000314"/>
    <property type="project" value="UniProtKB"/>
</dbReference>
<dbReference type="CDD" id="cd15845">
    <property type="entry name" value="SNARE_syntaxin16"/>
    <property type="match status" value="1"/>
</dbReference>
<dbReference type="FunFam" id="1.20.58.70:FF:000010">
    <property type="entry name" value="Syntaxin-43"/>
    <property type="match status" value="1"/>
</dbReference>
<dbReference type="Gene3D" id="1.20.58.70">
    <property type="match status" value="1"/>
</dbReference>
<dbReference type="InterPro" id="IPR010989">
    <property type="entry name" value="SNARE"/>
</dbReference>
<dbReference type="InterPro" id="IPR045242">
    <property type="entry name" value="Syntaxin"/>
</dbReference>
<dbReference type="InterPro" id="IPR006012">
    <property type="entry name" value="Syntaxin/epimorphin_CS"/>
</dbReference>
<dbReference type="InterPro" id="IPR006011">
    <property type="entry name" value="Syntaxin_N"/>
</dbReference>
<dbReference type="InterPro" id="IPR000727">
    <property type="entry name" value="T_SNARE_dom"/>
</dbReference>
<dbReference type="PANTHER" id="PTHR19957">
    <property type="entry name" value="SYNTAXIN"/>
    <property type="match status" value="1"/>
</dbReference>
<dbReference type="PANTHER" id="PTHR19957:SF83">
    <property type="entry name" value="SYNTAXIN-16"/>
    <property type="match status" value="1"/>
</dbReference>
<dbReference type="Pfam" id="PF05739">
    <property type="entry name" value="SNARE"/>
    <property type="match status" value="1"/>
</dbReference>
<dbReference type="SMART" id="SM00503">
    <property type="entry name" value="SynN"/>
    <property type="match status" value="1"/>
</dbReference>
<dbReference type="SMART" id="SM00397">
    <property type="entry name" value="t_SNARE"/>
    <property type="match status" value="1"/>
</dbReference>
<dbReference type="SUPFAM" id="SSF47661">
    <property type="entry name" value="t-snare proteins"/>
    <property type="match status" value="1"/>
</dbReference>
<dbReference type="PROSITE" id="PS00914">
    <property type="entry name" value="SYNTAXIN"/>
    <property type="match status" value="1"/>
</dbReference>
<dbReference type="PROSITE" id="PS50192">
    <property type="entry name" value="T_SNARE"/>
    <property type="match status" value="1"/>
</dbReference>
<proteinExistence type="evidence at transcript level"/>
<evidence type="ECO:0000250" key="1">
    <source>
        <dbReference type="UniProtKB" id="Q9SWH4"/>
    </source>
</evidence>
<evidence type="ECO:0000255" key="2"/>
<evidence type="ECO:0000255" key="3">
    <source>
        <dbReference type="PROSITE-ProRule" id="PRU00202"/>
    </source>
</evidence>
<evidence type="ECO:0000256" key="4">
    <source>
        <dbReference type="SAM" id="MobiDB-lite"/>
    </source>
</evidence>
<evidence type="ECO:0000269" key="5">
    <source>
    </source>
</evidence>
<evidence type="ECO:0000269" key="6">
    <source>
    </source>
</evidence>
<evidence type="ECO:0000269" key="7">
    <source>
    </source>
</evidence>
<evidence type="ECO:0000303" key="8">
    <source ref="1"/>
</evidence>
<evidence type="ECO:0000303" key="9">
    <source ref="5"/>
</evidence>
<evidence type="ECO:0000305" key="10"/>
<evidence type="ECO:0000312" key="11">
    <source>
        <dbReference type="Araport" id="AT3G05710"/>
    </source>
</evidence>
<evidence type="ECO:0000312" key="12">
    <source>
        <dbReference type="EMBL" id="AAF26126.1"/>
    </source>
</evidence>
<reference key="1">
    <citation type="submission" date="1999-08" db="EMBL/GenBank/DDBJ databases">
        <title>Vesicle traffic in Arabidopsis thaliana: characterization of AtSNAP33, a novel plant t-SNARE that interacts with syntaxins.</title>
        <authorList>
            <person name="Gansel X."/>
            <person name="Sticher L."/>
        </authorList>
    </citation>
    <scope>NUCLEOTIDE SEQUENCE [MRNA] (ISOFORM 2)</scope>
    <source>
        <strain>cv. Columbia</strain>
    </source>
</reference>
<reference key="2">
    <citation type="journal article" date="2000" name="Nature">
        <title>Sequence and analysis of chromosome 3 of the plant Arabidopsis thaliana.</title>
        <authorList>
            <person name="Salanoubat M."/>
            <person name="Lemcke K."/>
            <person name="Rieger M."/>
            <person name="Ansorge W."/>
            <person name="Unseld M."/>
            <person name="Fartmann B."/>
            <person name="Valle G."/>
            <person name="Bloecker H."/>
            <person name="Perez-Alonso M."/>
            <person name="Obermaier B."/>
            <person name="Delseny M."/>
            <person name="Boutry M."/>
            <person name="Grivell L.A."/>
            <person name="Mache R."/>
            <person name="Puigdomenech P."/>
            <person name="De Simone V."/>
            <person name="Choisne N."/>
            <person name="Artiguenave F."/>
            <person name="Robert C."/>
            <person name="Brottier P."/>
            <person name="Wincker P."/>
            <person name="Cattolico L."/>
            <person name="Weissenbach J."/>
            <person name="Saurin W."/>
            <person name="Quetier F."/>
            <person name="Schaefer M."/>
            <person name="Mueller-Auer S."/>
            <person name="Gabel C."/>
            <person name="Fuchs M."/>
            <person name="Benes V."/>
            <person name="Wurmbach E."/>
            <person name="Drzonek H."/>
            <person name="Erfle H."/>
            <person name="Jordan N."/>
            <person name="Bangert S."/>
            <person name="Wiedelmann R."/>
            <person name="Kranz H."/>
            <person name="Voss H."/>
            <person name="Holland R."/>
            <person name="Brandt P."/>
            <person name="Nyakatura G."/>
            <person name="Vezzi A."/>
            <person name="D'Angelo M."/>
            <person name="Pallavicini A."/>
            <person name="Toppo S."/>
            <person name="Simionati B."/>
            <person name="Conrad A."/>
            <person name="Hornischer K."/>
            <person name="Kauer G."/>
            <person name="Loehnert T.-H."/>
            <person name="Nordsiek G."/>
            <person name="Reichelt J."/>
            <person name="Scharfe M."/>
            <person name="Schoen O."/>
            <person name="Bargues M."/>
            <person name="Terol J."/>
            <person name="Climent J."/>
            <person name="Navarro P."/>
            <person name="Collado C."/>
            <person name="Perez-Perez A."/>
            <person name="Ottenwaelder B."/>
            <person name="Duchemin D."/>
            <person name="Cooke R."/>
            <person name="Laudie M."/>
            <person name="Berger-Llauro C."/>
            <person name="Purnelle B."/>
            <person name="Masuy D."/>
            <person name="de Haan M."/>
            <person name="Maarse A.C."/>
            <person name="Alcaraz J.-P."/>
            <person name="Cottet A."/>
            <person name="Casacuberta E."/>
            <person name="Monfort A."/>
            <person name="Argiriou A."/>
            <person name="Flores M."/>
            <person name="Liguori R."/>
            <person name="Vitale D."/>
            <person name="Mannhaupt G."/>
            <person name="Haase D."/>
            <person name="Schoof H."/>
            <person name="Rudd S."/>
            <person name="Zaccaria P."/>
            <person name="Mewes H.-W."/>
            <person name="Mayer K.F.X."/>
            <person name="Kaul S."/>
            <person name="Town C.D."/>
            <person name="Koo H.L."/>
            <person name="Tallon L.J."/>
            <person name="Jenkins J."/>
            <person name="Rooney T."/>
            <person name="Rizzo M."/>
            <person name="Walts A."/>
            <person name="Utterback T."/>
            <person name="Fujii C.Y."/>
            <person name="Shea T.P."/>
            <person name="Creasy T.H."/>
            <person name="Haas B."/>
            <person name="Maiti R."/>
            <person name="Wu D."/>
            <person name="Peterson J."/>
            <person name="Van Aken S."/>
            <person name="Pai G."/>
            <person name="Militscher J."/>
            <person name="Sellers P."/>
            <person name="Gill J.E."/>
            <person name="Feldblyum T.V."/>
            <person name="Preuss D."/>
            <person name="Lin X."/>
            <person name="Nierman W.C."/>
            <person name="Salzberg S.L."/>
            <person name="White O."/>
            <person name="Venter J.C."/>
            <person name="Fraser C.M."/>
            <person name="Kaneko T."/>
            <person name="Nakamura Y."/>
            <person name="Sato S."/>
            <person name="Kato T."/>
            <person name="Asamizu E."/>
            <person name="Sasamoto S."/>
            <person name="Kimura T."/>
            <person name="Idesawa K."/>
            <person name="Kawashima K."/>
            <person name="Kishida Y."/>
            <person name="Kiyokawa C."/>
            <person name="Kohara M."/>
            <person name="Matsumoto M."/>
            <person name="Matsuno A."/>
            <person name="Muraki A."/>
            <person name="Nakayama S."/>
            <person name="Nakazaki N."/>
            <person name="Shinpo S."/>
            <person name="Takeuchi C."/>
            <person name="Wada T."/>
            <person name="Watanabe A."/>
            <person name="Yamada M."/>
            <person name="Yasuda M."/>
            <person name="Tabata S."/>
        </authorList>
    </citation>
    <scope>NUCLEOTIDE SEQUENCE [LARGE SCALE GENOMIC DNA]</scope>
    <source>
        <strain>cv. Columbia</strain>
    </source>
</reference>
<reference key="3">
    <citation type="journal article" date="2017" name="Plant J.">
        <title>Araport11: a complete reannotation of the Arabidopsis thaliana reference genome.</title>
        <authorList>
            <person name="Cheng C.Y."/>
            <person name="Krishnakumar V."/>
            <person name="Chan A.P."/>
            <person name="Thibaud-Nissen F."/>
            <person name="Schobel S."/>
            <person name="Town C.D."/>
        </authorList>
    </citation>
    <scope>GENOME REANNOTATION</scope>
    <source>
        <strain>cv. Columbia</strain>
    </source>
</reference>
<reference key="4">
    <citation type="journal article" date="2003" name="Science">
        <title>Empirical analysis of transcriptional activity in the Arabidopsis genome.</title>
        <authorList>
            <person name="Yamada K."/>
            <person name="Lim J."/>
            <person name="Dale J.M."/>
            <person name="Chen H."/>
            <person name="Shinn P."/>
            <person name="Palm C.J."/>
            <person name="Southwick A.M."/>
            <person name="Wu H.C."/>
            <person name="Kim C.J."/>
            <person name="Nguyen M."/>
            <person name="Pham P.K."/>
            <person name="Cheuk R.F."/>
            <person name="Karlin-Newmann G."/>
            <person name="Liu S.X."/>
            <person name="Lam B."/>
            <person name="Sakano H."/>
            <person name="Wu T."/>
            <person name="Yu G."/>
            <person name="Miranda M."/>
            <person name="Quach H.L."/>
            <person name="Tripp M."/>
            <person name="Chang C.H."/>
            <person name="Lee J.M."/>
            <person name="Toriumi M.J."/>
            <person name="Chan M.M."/>
            <person name="Tang C.C."/>
            <person name="Onodera C.S."/>
            <person name="Deng J.M."/>
            <person name="Akiyama K."/>
            <person name="Ansari Y."/>
            <person name="Arakawa T."/>
            <person name="Banh J."/>
            <person name="Banno F."/>
            <person name="Bowser L."/>
            <person name="Brooks S.Y."/>
            <person name="Carninci P."/>
            <person name="Chao Q."/>
            <person name="Choy N."/>
            <person name="Enju A."/>
            <person name="Goldsmith A.D."/>
            <person name="Gurjal M."/>
            <person name="Hansen N.F."/>
            <person name="Hayashizaki Y."/>
            <person name="Johnson-Hopson C."/>
            <person name="Hsuan V.W."/>
            <person name="Iida K."/>
            <person name="Karnes M."/>
            <person name="Khan S."/>
            <person name="Koesema E."/>
            <person name="Ishida J."/>
            <person name="Jiang P.X."/>
            <person name="Jones T."/>
            <person name="Kawai J."/>
            <person name="Kamiya A."/>
            <person name="Meyers C."/>
            <person name="Nakajima M."/>
            <person name="Narusaka M."/>
            <person name="Seki M."/>
            <person name="Sakurai T."/>
            <person name="Satou M."/>
            <person name="Tamse R."/>
            <person name="Vaysberg M."/>
            <person name="Wallender E.K."/>
            <person name="Wong C."/>
            <person name="Yamamura Y."/>
            <person name="Yuan S."/>
            <person name="Shinozaki K."/>
            <person name="Davis R.W."/>
            <person name="Theologis A."/>
            <person name="Ecker J.R."/>
        </authorList>
    </citation>
    <scope>NUCLEOTIDE SEQUENCE [LARGE SCALE MRNA] (ISOFORM 1)</scope>
    <source>
        <strain>cv. Columbia</strain>
    </source>
</reference>
<reference key="5">
    <citation type="submission" date="2002-03" db="EMBL/GenBank/DDBJ databases">
        <title>Full-length cDNA from Arabidopsis thaliana.</title>
        <authorList>
            <person name="Brover V.V."/>
            <person name="Troukhan M.E."/>
            <person name="Alexandrov N.A."/>
            <person name="Lu Y.-P."/>
            <person name="Flavell R.B."/>
            <person name="Feldmann K.A."/>
        </authorList>
    </citation>
    <scope>NUCLEOTIDE SEQUENCE [LARGE SCALE MRNA] (ISOFORM 2)</scope>
</reference>
<reference key="6">
    <citation type="journal article" date="2004" name="Cell Struct. Funct.">
        <title>Systematic analysis of SNARE molecules in Arabidopsis: dissection of the post-Golgi network in plant cells.</title>
        <authorList>
            <person name="Uemura T."/>
            <person name="Ueda T."/>
            <person name="Ohniwa R.L."/>
            <person name="Nakano A."/>
            <person name="Takeyasu K."/>
            <person name="Sato M.H."/>
        </authorList>
    </citation>
    <scope>SUBCELLULAR LOCATION</scope>
    <scope>TISSUE SPECIFICITY</scope>
</reference>
<reference key="7">
    <citation type="journal article" date="2012" name="Proc. Natl. Acad. Sci. U.S.A.">
        <title>Qa-SNAREs localized to the trans-Golgi network regulate multiple transport pathways and extracellular disease resistance in plants.</title>
        <authorList>
            <person name="Uemura T."/>
            <person name="Kim H."/>
            <person name="Saito C."/>
            <person name="Ebine K."/>
            <person name="Ueda T."/>
            <person name="Schulze-Lefert P."/>
            <person name="Nakano A."/>
        </authorList>
    </citation>
    <scope>FUNCTION</scope>
    <scope>DISRUPTION PHENOTYPE</scope>
    <scope>SUBCELLULAR LOCATION</scope>
    <scope>GENE FAMILY</scope>
    <source>
        <strain>cv. Columbia</strain>
    </source>
</reference>
<reference key="8">
    <citation type="journal article" date="2013" name="BMC Biochem.">
        <title>Functional redundancy between trans-Golgi network SNARE family members in Arabidopsis thaliana.</title>
        <authorList>
            <person name="Kim S.-J."/>
            <person name="Bassham D.C."/>
        </authorList>
    </citation>
    <scope>FUNCTION</scope>
</reference>